<organism evidence="11">
    <name type="scientific">Homo sapiens</name>
    <name type="common">Human</name>
    <dbReference type="NCBI Taxonomy" id="9606"/>
    <lineage>
        <taxon>Eukaryota</taxon>
        <taxon>Metazoa</taxon>
        <taxon>Chordata</taxon>
        <taxon>Craniata</taxon>
        <taxon>Vertebrata</taxon>
        <taxon>Euteleostomi</taxon>
        <taxon>Mammalia</taxon>
        <taxon>Eutheria</taxon>
        <taxon>Euarchontoglires</taxon>
        <taxon>Primates</taxon>
        <taxon>Haplorrhini</taxon>
        <taxon>Catarrhini</taxon>
        <taxon>Hominidae</taxon>
        <taxon>Homo</taxon>
    </lineage>
</organism>
<gene>
    <name type="primary">ZHX1</name>
</gene>
<name>ZHX1_HUMAN</name>
<reference evidence="10" key="1">
    <citation type="journal article" date="1999" name="Biochem. Biophys. Res. Commun.">
        <title>Human ZHX1: cloning, chromosomal location, and interaction with transcription factor NF-Y.</title>
        <authorList>
            <person name="Yamada K."/>
            <person name="Printz R.L."/>
            <person name="Osawa H."/>
            <person name="Granner D.K."/>
        </authorList>
    </citation>
    <scope>NUCLEOTIDE SEQUENCE [MRNA] (ISOFORM 1)</scope>
    <scope>TISSUE SPECIFICITY</scope>
    <scope>INTERACTION WITH NFYA</scope>
    <source>
        <tissue evidence="4">Liver</tissue>
    </source>
</reference>
<reference evidence="11" key="2">
    <citation type="submission" date="1999-10" db="EMBL/GenBank/DDBJ databases">
        <title>Identification and cloning of the human ZHX1 gene.</title>
        <authorList>
            <person name="Mueller R."/>
            <person name="Ziegler B.L."/>
        </authorList>
    </citation>
    <scope>NUCLEOTIDE SEQUENCE [MRNA] (ISOFORM 1)</scope>
</reference>
<reference evidence="10" key="3">
    <citation type="journal article" date="2004" name="Genome Res.">
        <title>The status, quality, and expansion of the NIH full-length cDNA project: the Mammalian Gene Collection (MGC).</title>
        <authorList>
            <consortium name="The MGC Project Team"/>
        </authorList>
    </citation>
    <scope>NUCLEOTIDE SEQUENCE [LARGE SCALE MRNA] (ISOFORM 1)</scope>
    <source>
        <tissue evidence="12">Testis</tissue>
    </source>
</reference>
<reference evidence="10" key="4">
    <citation type="journal article" date="1999" name="FEBS Lett.">
        <title>Identification of proteins that interact with NF-YA.</title>
        <authorList>
            <person name="Yamada K."/>
            <person name="Osawa H."/>
            <person name="Granner D.K."/>
        </authorList>
    </citation>
    <scope>INTERACTION WITH NFYA</scope>
</reference>
<reference evidence="10" key="5">
    <citation type="journal article" date="2002" name="Biochem. Biophys. Res. Commun.">
        <title>Functional analysis and the molecular dissection of zinc-fingers and homeoboxes 1 (ZHX1).</title>
        <authorList>
            <person name="Yamada K."/>
            <person name="Kawata H."/>
            <person name="Matsuura K."/>
            <person name="Shou Z."/>
            <person name="Hirano S."/>
            <person name="Mizutani T."/>
            <person name="Yazawa T."/>
            <person name="Yoshino M."/>
            <person name="Sekiguchi T."/>
            <person name="Kajitani T."/>
            <person name="Miyamoto K."/>
        </authorList>
    </citation>
    <scope>FUNCTION</scope>
    <scope>HOMODIMERIZATION</scope>
    <scope>SUBCELLULAR LOCATION</scope>
</reference>
<reference evidence="10" key="6">
    <citation type="journal article" date="2003" name="Biochem. J.">
        <title>Analysis of zinc-fingers and homeoboxes (ZHX)-1-interacting proteins: molecular cloning and characterization of a member of the ZHX family, ZHX3.</title>
        <authorList>
            <person name="Yamada K."/>
            <person name="Kawata H."/>
            <person name="Shou Z."/>
            <person name="Hirano S."/>
            <person name="Mizutani T."/>
            <person name="Yazawa T."/>
            <person name="Sekiguchi T."/>
            <person name="Yoshino M."/>
            <person name="Kajitani T."/>
            <person name="Miyamoto K."/>
        </authorList>
    </citation>
    <scope>HETERODIMERIZATION WITH ZHX3</scope>
    <scope>INTERACTION WITH ATF7IP</scope>
</reference>
<reference evidence="10" key="7">
    <citation type="journal article" date="2003" name="Biochem. J.">
        <title>Zinc-fingers and homeoboxes (ZHX) 2, a novel member of the ZHX family, functions as a transcriptional repressor.</title>
        <authorList>
            <person name="Kawata H."/>
            <person name="Yamada K."/>
            <person name="Shou Z."/>
            <person name="Mizutani T."/>
            <person name="Yazawa T."/>
            <person name="Yoshino M."/>
            <person name="Sekiguchi T."/>
            <person name="Kajitani T."/>
            <person name="Miyamoto K."/>
        </authorList>
    </citation>
    <scope>HETERODIMERIZATION WITH ZHX2</scope>
</reference>
<reference key="8">
    <citation type="journal article" date="2006" name="J. Biol. Chem.">
        <title>ZHX proteins regulate podocyte gene expression during the development of nephrotic syndrome.</title>
        <authorList>
            <person name="Liu G."/>
            <person name="Clement L.C."/>
            <person name="Kanwar Y.S."/>
            <person name="Avila-Casado C."/>
            <person name="Chugh S.S."/>
        </authorList>
    </citation>
    <scope>SUBCELLULAR LOCATION</scope>
    <scope>TISSUE SPECIFICITY</scope>
    <source>
        <tissue>Kidney</tissue>
    </source>
</reference>
<reference key="9">
    <citation type="journal article" date="2006" name="Nat. Biotechnol.">
        <title>A probability-based approach for high-throughput protein phosphorylation analysis and site localization.</title>
        <authorList>
            <person name="Beausoleil S.A."/>
            <person name="Villen J."/>
            <person name="Gerber S.A."/>
            <person name="Rush J."/>
            <person name="Gygi S.P."/>
        </authorList>
    </citation>
    <scope>IDENTIFICATION BY MASS SPECTROMETRY [LARGE SCALE ANALYSIS]</scope>
    <source>
        <tissue>Cervix carcinoma</tissue>
    </source>
</reference>
<reference key="10">
    <citation type="journal article" date="2007" name="Biochem. Biophys. Res. Commun.">
        <title>Zinc-fingers and homeoboxes 1 (ZHX1) binds DNA methyltransferase (DNMT) 3B to enhance DNMT3B-mediated transcriptional repression.</title>
        <authorList>
            <person name="Kim S.H."/>
            <person name="Park J."/>
            <person name="Choi M.C."/>
            <person name="Kim H.P."/>
            <person name="Park J.H."/>
            <person name="Jung Y."/>
            <person name="Lee J.H."/>
            <person name="Oh D.Y."/>
            <person name="Im S.A."/>
            <person name="Bang Y.J."/>
            <person name="Kim T.Y."/>
        </authorList>
    </citation>
    <scope>INTERACTION WITH DNMT3B</scope>
</reference>
<reference key="11">
    <citation type="journal article" date="2008" name="Proc. Natl. Acad. Sci. U.S.A.">
        <title>A quantitative atlas of mitotic phosphorylation.</title>
        <authorList>
            <person name="Dephoure N."/>
            <person name="Zhou C."/>
            <person name="Villen J."/>
            <person name="Beausoleil S.A."/>
            <person name="Bakalarski C.E."/>
            <person name="Elledge S.J."/>
            <person name="Gygi S.P."/>
        </authorList>
    </citation>
    <scope>PHOSPHORYLATION [LARGE SCALE ANALYSIS] AT SER-45; SER-47 AND SER-48</scope>
    <scope>IDENTIFICATION BY MASS SPECTROMETRY [LARGE SCALE ANALYSIS]</scope>
    <source>
        <tissue>Cervix carcinoma</tissue>
    </source>
</reference>
<reference key="12">
    <citation type="journal article" date="2009" name="Anal. Chem.">
        <title>Lys-N and trypsin cover complementary parts of the phosphoproteome in a refined SCX-based approach.</title>
        <authorList>
            <person name="Gauci S."/>
            <person name="Helbig A.O."/>
            <person name="Slijper M."/>
            <person name="Krijgsveld J."/>
            <person name="Heck A.J."/>
            <person name="Mohammed S."/>
        </authorList>
    </citation>
    <scope>IDENTIFICATION BY MASS SPECTROMETRY [LARGE SCALE ANALYSIS]</scope>
</reference>
<reference key="13">
    <citation type="journal article" date="2009" name="Sci. Signal.">
        <title>Quantitative phosphoproteomic analysis of T cell receptor signaling reveals system-wide modulation of protein-protein interactions.</title>
        <authorList>
            <person name="Mayya V."/>
            <person name="Lundgren D.H."/>
            <person name="Hwang S.-I."/>
            <person name="Rezaul K."/>
            <person name="Wu L."/>
            <person name="Eng J.K."/>
            <person name="Rodionov V."/>
            <person name="Han D.K."/>
        </authorList>
    </citation>
    <scope>PHOSPHORYLATION [LARGE SCALE ANALYSIS] AT SER-47; SER-48 AND SER-648</scope>
    <scope>IDENTIFICATION BY MASS SPECTROMETRY [LARGE SCALE ANALYSIS]</scope>
    <source>
        <tissue>Leukemic T-cell</tissue>
    </source>
</reference>
<reference key="14">
    <citation type="journal article" date="2013" name="J. Proteome Res.">
        <title>Toward a comprehensive characterization of a human cancer cell phosphoproteome.</title>
        <authorList>
            <person name="Zhou H."/>
            <person name="Di Palma S."/>
            <person name="Preisinger C."/>
            <person name="Peng M."/>
            <person name="Polat A.N."/>
            <person name="Heck A.J."/>
            <person name="Mohammed S."/>
        </authorList>
    </citation>
    <scope>PHOSPHORYLATION [LARGE SCALE ANALYSIS] AT SER-202 AND SER-774</scope>
    <scope>IDENTIFICATION BY MASS SPECTROMETRY [LARGE SCALE ANALYSIS]</scope>
    <source>
        <tissue>Cervix carcinoma</tissue>
        <tissue>Erythroleukemia</tissue>
    </source>
</reference>
<reference key="15">
    <citation type="journal article" date="2014" name="J. Proteomics">
        <title>An enzyme assisted RP-RPLC approach for in-depth analysis of human liver phosphoproteome.</title>
        <authorList>
            <person name="Bian Y."/>
            <person name="Song C."/>
            <person name="Cheng K."/>
            <person name="Dong M."/>
            <person name="Wang F."/>
            <person name="Huang J."/>
            <person name="Sun D."/>
            <person name="Wang L."/>
            <person name="Ye M."/>
            <person name="Zou H."/>
        </authorList>
    </citation>
    <scope>PHOSPHORYLATION [LARGE SCALE ANALYSIS] AT THR-36 AND SER-48</scope>
    <scope>IDENTIFICATION BY MASS SPECTROMETRY [LARGE SCALE ANALYSIS]</scope>
    <source>
        <tissue>Liver</tissue>
    </source>
</reference>
<reference key="16">
    <citation type="journal article" date="2014" name="Nat. Struct. Mol. Biol.">
        <title>Uncovering global SUMOylation signaling networks in a site-specific manner.</title>
        <authorList>
            <person name="Hendriks I.A."/>
            <person name="D'Souza R.C."/>
            <person name="Yang B."/>
            <person name="Verlaan-de Vries M."/>
            <person name="Mann M."/>
            <person name="Vertegaal A.C."/>
        </authorList>
    </citation>
    <scope>SUMOYLATION [LARGE SCALE ANALYSIS] AT LYS-454</scope>
    <scope>IDENTIFICATION BY MASS SPECTROMETRY [LARGE SCALE ANALYSIS]</scope>
</reference>
<reference key="17">
    <citation type="journal article" date="2017" name="Nat. Struct. Mol. Biol.">
        <title>Site-specific mapping of the human SUMO proteome reveals co-modification with phosphorylation.</title>
        <authorList>
            <person name="Hendriks I.A."/>
            <person name="Lyon D."/>
            <person name="Young C."/>
            <person name="Jensen L.J."/>
            <person name="Vertegaal A.C."/>
            <person name="Nielsen M.L."/>
        </authorList>
    </citation>
    <scope>SUMOYLATION [LARGE SCALE ANALYSIS] AT LYS-159; LYS-441; LYS-454; LYS-485 AND LYS-629</scope>
    <scope>IDENTIFICATION BY MASS SPECTROMETRY [LARGE SCALE ANALYSIS]</scope>
</reference>
<reference evidence="11" key="18">
    <citation type="submission" date="2006-04" db="PDB data bank">
        <title>Solution structure of the zinc-finger region of human zinc-fingers and homeoboxes 1 (ZHX1).</title>
        <authorList>
            <consortium name="Structural proteomics in Europe (SPINE)"/>
        </authorList>
    </citation>
    <scope>STRUCTURE BY NMR OF 60-153</scope>
</reference>
<reference evidence="11" key="19">
    <citation type="submission" date="2007-02" db="PDB data bank">
        <title>The solution structure of the third homeobox domain of human zinc fingers and homeoboxes protein.</title>
        <authorList>
            <consortium name="RIKEN structural genomics initiative (RSGI)"/>
        </authorList>
    </citation>
    <scope>STRUCTURE BY NMR OF 565-640</scope>
</reference>
<reference key="20">
    <citation type="journal article" date="2009" name="Biochemistry">
        <title>The tandem zinc-finger region of human ZHX adopts a novel C2H2 zinc finger structure with a C-terminal extension.</title>
        <authorList>
            <person name="Wienk H."/>
            <person name="Lammers I."/>
            <person name="Hotze A."/>
            <person name="Wu J."/>
            <person name="Wechselberger R.W."/>
            <person name="Owens R."/>
            <person name="Stammers D.K."/>
            <person name="Stuart D."/>
            <person name="Kaptein R."/>
            <person name="Folkers G.E."/>
        </authorList>
    </citation>
    <scope>STRUCTURE BY NMR OF 60-153</scope>
</reference>
<reference key="21">
    <citation type="journal article" date="2010" name="BMC Struct. Biol.">
        <title>Novel structural features in two ZHX homeodomains derived from a systematic study of single and multiple domains.</title>
        <authorList>
            <person name="Bird L.E."/>
            <person name="Ren J."/>
            <person name="Nettleship J.E."/>
            <person name="Folkers G.E."/>
            <person name="Owens R.J."/>
            <person name="Stammers D.K."/>
        </authorList>
    </citation>
    <scope>X-RAY CRYSTALLOGRAPHY (2.6 ANGSTROMS) OF 655-731</scope>
</reference>
<comment type="function">
    <text evidence="6">Acts as a transcriptional repressor. Increases DNMT3B-mediated repressive transcriptional activity when DNMT3B is tethered to DNA. May link molecule between DNMT3B and other co-repressor proteins.</text>
</comment>
<comment type="subunit">
    <text evidence="4 5 7 9">Forms homodimers. Heterodimer (via HD1 domain) with ZHX2 (via HD1 domain). Also forms a heterodimer with ZHX3 which is a prerequisite for repressor activity. Interacts with ATF7IP and NFYA. Interacts (via homeobox domains) with DNMT3B (via PWWP domain).</text>
</comment>
<comment type="interaction">
    <interactant intactId="EBI-347767">
        <id>Q9UKY1</id>
    </interactant>
    <interactant intactId="EBI-930964">
        <id>P54253</id>
        <label>ATXN1</label>
    </interactant>
    <organismsDiffer>false</organismsDiffer>
    <experiments>11</experiments>
</comment>
<comment type="interaction">
    <interactant intactId="EBI-347767">
        <id>Q9UKY1</id>
    </interactant>
    <interactant intactId="EBI-6083193">
        <id>Q9UBC3-1</id>
        <label>DNMT3B</label>
    </interactant>
    <organismsDiffer>false</organismsDiffer>
    <experiments>6</experiments>
</comment>
<comment type="interaction">
    <interactant intactId="EBI-347767">
        <id>Q9UKY1</id>
    </interactant>
    <interactant intactId="EBI-466029">
        <id>P42858</id>
        <label>HTT</label>
    </interactant>
    <organismsDiffer>false</organismsDiffer>
    <experiments>6</experiments>
</comment>
<comment type="interaction">
    <interactant intactId="EBI-347767">
        <id>Q9UKY1</id>
    </interactant>
    <interactant intactId="EBI-948566">
        <id>Q9Y6X8</id>
        <label>ZHX2</label>
    </interactant>
    <organismsDiffer>false</organismsDiffer>
    <experiments>2</experiments>
</comment>
<comment type="interaction">
    <interactant intactId="EBI-347767">
        <id>Q9UKY1</id>
    </interactant>
    <interactant intactId="EBI-2623509">
        <id>Q15326</id>
        <label>ZMYND11</label>
    </interactant>
    <organismsDiffer>false</organismsDiffer>
    <experiments>2</experiments>
</comment>
<comment type="subcellular location">
    <subcellularLocation>
        <location evidence="2 6 8">Nucleus</location>
    </subcellularLocation>
    <text>Colocalized in the nucleus with DNMT3B.</text>
</comment>
<comment type="alternative products">
    <event type="alternative splicing"/>
    <isoform>
        <id>Q9UKY1-1</id>
        <name>1</name>
        <sequence type="displayed"/>
    </isoform>
    <isoform>
        <id>Q96EF9-1</id>
        <name>2</name>
        <name>ZHX1-C8orf76</name>
        <sequence type="external"/>
    </isoform>
</comment>
<comment type="tissue specificity">
    <text evidence="4 8">Ubiquitously expressed. Expressed in podocytes.</text>
</comment>
<comment type="similarity">
    <text evidence="10">Belongs to the ZHX family.</text>
</comment>
<proteinExistence type="evidence at protein level"/>
<protein>
    <recommendedName>
        <fullName>Zinc fingers and homeoboxes protein 1</fullName>
    </recommendedName>
</protein>
<sequence length="873" mass="98098">MASRRKSTTPCMVLASEQDPDLELISDLDEGPPVLTPVENTRAESISSDEEVHESVDSDNQQNKKVEGGYECKYCTFQTPDLNMFTFHVDSEHPNVVLNSSYVCVECNFLTKRYDALSEHNLKYHPGEENFKLTMVKRNNQTIFEQTINDLTFDGSFVKEENAEQAESTEVSSSGISISKTPIMKMMKNKVENKRIAVHHNSVEDVPEEKENEIKPDREEIVENPSSSASESNTSTSIVNRIHPSTASTVVTPAAVLPGLAQVITAVSAQQNSNLIPKVLIPVNSIPTYNAALDNNPLLLNTYNKFPYPTMSEITVLSAQAKYTEEQIKIWFSAQRLKHGVSWTPEEVEEARRKQFNGTVHTVPQTITVIPTHISTGSNGLPSILQTCQIVGQPGLVLTQVAGTNTLPVTAPIALTVAGVPSQNNIQKSQVPAAQPTAETKPATAAVPTSQSVKHETALVNPDSFGIRAKKTKEQLAELKVSYLKNQFPHDSEIIRLMKITGLTKGEIKKWFSDTRYNQRNSKSNQCLHLNNDSSTTIIIDSSDETTESPTVGTAQPKQSWNPFPDFTPQKFKEKTAEQLRVLQASFLNSSVLTDEELNRLRAQTKLTRREIDAWFTEKKKSKALKEEKMEIDESNAGSSKEEAGETSPADESGAPKSGSTGKICKKTPEQLHMLKSAFVRTQWPSPEEYDKLAKESGLARTDIVSWFGDTRYAWKNGNLKWYYYYQSANSSSMNGLSSLRKRGRGRPKGRGRGRPRGRPRGSKRINNWDRGPSLIKFKTGTAILKDYYLKHKFLNEQDLDELVNKSHMGYEQVREWFAERQRRSELGIELFEENEEEDEVIDDQEEDEEETDDSDTWEPPRHVKRKLSKSDD</sequence>
<dbReference type="EMBL" id="AF106862">
    <property type="protein sequence ID" value="AAD50624.1"/>
    <property type="molecule type" value="mRNA"/>
</dbReference>
<dbReference type="EMBL" id="AF195766">
    <property type="protein sequence ID" value="AAF35183.1"/>
    <property type="molecule type" value="mRNA"/>
</dbReference>
<dbReference type="EMBL" id="BC040481">
    <property type="protein sequence ID" value="AAH40481.1"/>
    <property type="molecule type" value="mRNA"/>
</dbReference>
<dbReference type="CCDS" id="CCDS6342.1">
    <molecule id="Q9UKY1-1"/>
</dbReference>
<dbReference type="PIR" id="JC7079">
    <property type="entry name" value="JC7079"/>
</dbReference>
<dbReference type="RefSeq" id="NP_001017926.1">
    <molecule id="Q9UKY1-1"/>
    <property type="nucleotide sequence ID" value="NM_001017926.3"/>
</dbReference>
<dbReference type="RefSeq" id="NP_009153.3">
    <molecule id="Q9UKY1-1"/>
    <property type="nucleotide sequence ID" value="NM_007222.4"/>
</dbReference>
<dbReference type="PDB" id="2ECB">
    <property type="method" value="NMR"/>
    <property type="chains" value="A=565-640"/>
</dbReference>
<dbReference type="PDB" id="2GHF">
    <property type="method" value="NMR"/>
    <property type="chains" value="A=60-153"/>
</dbReference>
<dbReference type="PDB" id="2LY9">
    <property type="method" value="NMR"/>
    <property type="chains" value="A=462-532"/>
</dbReference>
<dbReference type="PDB" id="3NAR">
    <property type="method" value="X-ray"/>
    <property type="resolution" value="2.60 A"/>
    <property type="chains" value="A/B=655-731"/>
</dbReference>
<dbReference type="PDBsum" id="2ECB"/>
<dbReference type="PDBsum" id="2GHF"/>
<dbReference type="PDBsum" id="2LY9"/>
<dbReference type="PDBsum" id="3NAR"/>
<dbReference type="SMR" id="Q9UKY1"/>
<dbReference type="BioGRID" id="116406">
    <property type="interactions" value="94"/>
</dbReference>
<dbReference type="FunCoup" id="Q9UKY1">
    <property type="interactions" value="2512"/>
</dbReference>
<dbReference type="IntAct" id="Q9UKY1">
    <property type="interactions" value="89"/>
</dbReference>
<dbReference type="MINT" id="Q9UKY1"/>
<dbReference type="STRING" id="9606.ENSP00000297857"/>
<dbReference type="GlyConnect" id="2093">
    <property type="glycosylation" value="1 N-Linked glycan (1 site), 1 O-GlcNAc glycan (1 site)"/>
</dbReference>
<dbReference type="GlyCosmos" id="Q9UKY1">
    <property type="glycosylation" value="5 sites, 3 glycans"/>
</dbReference>
<dbReference type="GlyGen" id="Q9UKY1">
    <property type="glycosylation" value="15 sites, 3 N-linked glycans (2 sites), 1 O-linked glycan (13 sites)"/>
</dbReference>
<dbReference type="iPTMnet" id="Q9UKY1"/>
<dbReference type="PhosphoSitePlus" id="Q9UKY1"/>
<dbReference type="BioMuta" id="ZHX1"/>
<dbReference type="DMDM" id="44888551"/>
<dbReference type="jPOST" id="Q9UKY1"/>
<dbReference type="MassIVE" id="Q9UKY1"/>
<dbReference type="PaxDb" id="9606-ENSP00000297857"/>
<dbReference type="PeptideAtlas" id="Q9UKY1"/>
<dbReference type="ProteomicsDB" id="84909">
    <molecule id="Q9UKY1-1"/>
</dbReference>
<dbReference type="Pumba" id="Q9UKY1"/>
<dbReference type="ABCD" id="Q9UKY1">
    <property type="antibodies" value="4 sequenced antibodies"/>
</dbReference>
<dbReference type="Antibodypedia" id="26954">
    <property type="antibodies" value="168 antibodies from 22 providers"/>
</dbReference>
<dbReference type="DNASU" id="11244"/>
<dbReference type="Ensembl" id="ENST00000297857.3">
    <molecule id="Q9UKY1-1"/>
    <property type="protein sequence ID" value="ENSP00000297857.2"/>
    <property type="gene ID" value="ENSG00000165156.15"/>
</dbReference>
<dbReference type="Ensembl" id="ENST00000395571.8">
    <molecule id="Q9UKY1-1"/>
    <property type="protein sequence ID" value="ENSP00000378938.2"/>
    <property type="gene ID" value="ENSG00000165156.15"/>
</dbReference>
<dbReference type="Ensembl" id="ENST00000522655.5">
    <molecule id="Q9UKY1-1"/>
    <property type="protein sequence ID" value="ENSP00000428821.1"/>
    <property type="gene ID" value="ENSG00000165156.15"/>
</dbReference>
<dbReference type="GeneID" id="11244"/>
<dbReference type="KEGG" id="hsa:11244"/>
<dbReference type="MANE-Select" id="ENST00000395571.8">
    <property type="protein sequence ID" value="ENSP00000378938.2"/>
    <property type="RefSeq nucleotide sequence ID" value="NM_007222.5"/>
    <property type="RefSeq protein sequence ID" value="NP_009153.3"/>
</dbReference>
<dbReference type="UCSC" id="uc003yqe.4">
    <molecule id="Q9UKY1-1"/>
    <property type="organism name" value="human"/>
</dbReference>
<dbReference type="AGR" id="HGNC:12871"/>
<dbReference type="CTD" id="11244"/>
<dbReference type="DisGeNET" id="11244"/>
<dbReference type="GeneCards" id="ZHX1"/>
<dbReference type="HGNC" id="HGNC:12871">
    <property type="gene designation" value="ZHX1"/>
</dbReference>
<dbReference type="HPA" id="ENSG00000165156">
    <property type="expression patterns" value="Low tissue specificity"/>
</dbReference>
<dbReference type="MIM" id="604764">
    <property type="type" value="gene"/>
</dbReference>
<dbReference type="neXtProt" id="NX_Q9UKY1"/>
<dbReference type="OpenTargets" id="ENSG00000165156"/>
<dbReference type="PharmGKB" id="PA37460"/>
<dbReference type="VEuPathDB" id="HostDB:ENSG00000165156"/>
<dbReference type="eggNOG" id="ENOG502QT3D">
    <property type="taxonomic scope" value="Eukaryota"/>
</dbReference>
<dbReference type="GeneTree" id="ENSGT00950000182893"/>
<dbReference type="HOGENOM" id="CLU_009147_1_0_1"/>
<dbReference type="InParanoid" id="Q9UKY1"/>
<dbReference type="OMA" id="SSWGTFP"/>
<dbReference type="OrthoDB" id="6159439at2759"/>
<dbReference type="PAN-GO" id="Q9UKY1">
    <property type="GO annotations" value="3 GO annotations based on evolutionary models"/>
</dbReference>
<dbReference type="PhylomeDB" id="Q9UKY1"/>
<dbReference type="TreeFam" id="TF333363"/>
<dbReference type="PathwayCommons" id="Q9UKY1"/>
<dbReference type="SignaLink" id="Q9UKY1"/>
<dbReference type="SIGNOR" id="Q9UKY1"/>
<dbReference type="BioGRID-ORCS" id="11244">
    <property type="hits" value="13 hits in 1168 CRISPR screens"/>
</dbReference>
<dbReference type="CD-CODE" id="804901D1">
    <property type="entry name" value="Nuclear speckle"/>
</dbReference>
<dbReference type="EvolutionaryTrace" id="Q9UKY1"/>
<dbReference type="GeneWiki" id="ZHX1"/>
<dbReference type="GenomeRNAi" id="11244"/>
<dbReference type="Pharos" id="Q9UKY1">
    <property type="development level" value="Tbio"/>
</dbReference>
<dbReference type="PRO" id="PR:Q9UKY1"/>
<dbReference type="Proteomes" id="UP000005640">
    <property type="component" value="Chromosome 8"/>
</dbReference>
<dbReference type="RNAct" id="Q9UKY1">
    <property type="molecule type" value="protein"/>
</dbReference>
<dbReference type="Bgee" id="ENSG00000165156">
    <property type="expression patterns" value="Expressed in upper arm skin and 198 other cell types or tissues"/>
</dbReference>
<dbReference type="ExpressionAtlas" id="Q9UKY1">
    <property type="expression patterns" value="baseline and differential"/>
</dbReference>
<dbReference type="GO" id="GO:0000785">
    <property type="term" value="C:chromatin"/>
    <property type="evidence" value="ECO:0000247"/>
    <property type="project" value="NTNU_SB"/>
</dbReference>
<dbReference type="GO" id="GO:0005654">
    <property type="term" value="C:nucleoplasm"/>
    <property type="evidence" value="ECO:0000314"/>
    <property type="project" value="HPA"/>
</dbReference>
<dbReference type="GO" id="GO:0005634">
    <property type="term" value="C:nucleus"/>
    <property type="evidence" value="ECO:0000314"/>
    <property type="project" value="UniProtKB"/>
</dbReference>
<dbReference type="GO" id="GO:0003677">
    <property type="term" value="F:DNA binding"/>
    <property type="evidence" value="ECO:0007669"/>
    <property type="project" value="UniProtKB-KW"/>
</dbReference>
<dbReference type="GO" id="GO:0003700">
    <property type="term" value="F:DNA-binding transcription factor activity"/>
    <property type="evidence" value="ECO:0000314"/>
    <property type="project" value="UniProtKB"/>
</dbReference>
<dbReference type="GO" id="GO:0000981">
    <property type="term" value="F:DNA-binding transcription factor activity, RNA polymerase II-specific"/>
    <property type="evidence" value="ECO:0000247"/>
    <property type="project" value="NTNU_SB"/>
</dbReference>
<dbReference type="GO" id="GO:0046982">
    <property type="term" value="F:protein heterodimerization activity"/>
    <property type="evidence" value="ECO:0000314"/>
    <property type="project" value="UniProtKB"/>
</dbReference>
<dbReference type="GO" id="GO:0008270">
    <property type="term" value="F:zinc ion binding"/>
    <property type="evidence" value="ECO:0007669"/>
    <property type="project" value="UniProtKB-KW"/>
</dbReference>
<dbReference type="GO" id="GO:0030154">
    <property type="term" value="P:cell differentiation"/>
    <property type="evidence" value="ECO:0007669"/>
    <property type="project" value="UniProtKB-KW"/>
</dbReference>
<dbReference type="GO" id="GO:0045892">
    <property type="term" value="P:negative regulation of DNA-templated transcription"/>
    <property type="evidence" value="ECO:0000314"/>
    <property type="project" value="UniProtKB"/>
</dbReference>
<dbReference type="GO" id="GO:0000122">
    <property type="term" value="P:negative regulation of transcription by RNA polymerase II"/>
    <property type="evidence" value="ECO:0000314"/>
    <property type="project" value="UniProtKB"/>
</dbReference>
<dbReference type="GO" id="GO:0006357">
    <property type="term" value="P:regulation of transcription by RNA polymerase II"/>
    <property type="evidence" value="ECO:0000318"/>
    <property type="project" value="GO_Central"/>
</dbReference>
<dbReference type="CDD" id="cd00086">
    <property type="entry name" value="homeodomain"/>
    <property type="match status" value="5"/>
</dbReference>
<dbReference type="FunFam" id="1.10.10.60:FF:000262">
    <property type="entry name" value="Zinc fingers and homeoboxes 1"/>
    <property type="match status" value="1"/>
</dbReference>
<dbReference type="FunFam" id="1.10.10.60:FF:000235">
    <property type="entry name" value="Zinc fingers and homeoboxes protein 1"/>
    <property type="match status" value="1"/>
</dbReference>
<dbReference type="FunFam" id="1.10.10.60:FF:000240">
    <property type="entry name" value="Zinc fingers and homeoboxes protein 1"/>
    <property type="match status" value="1"/>
</dbReference>
<dbReference type="FunFam" id="3.30.160.60:FF:000296">
    <property type="entry name" value="Zinc fingers and homeoboxes protein 1"/>
    <property type="match status" value="1"/>
</dbReference>
<dbReference type="FunFam" id="1.10.10.60:FF:000237">
    <property type="entry name" value="zinc fingers and homeoboxes protein 1"/>
    <property type="match status" value="1"/>
</dbReference>
<dbReference type="FunFam" id="1.10.10.60:FF:000133">
    <property type="entry name" value="zinc fingers and homeoboxes protein 3"/>
    <property type="match status" value="1"/>
</dbReference>
<dbReference type="Gene3D" id="3.30.160.60">
    <property type="entry name" value="Classic Zinc Finger"/>
    <property type="match status" value="1"/>
</dbReference>
<dbReference type="Gene3D" id="1.10.10.60">
    <property type="entry name" value="Homeodomain-like"/>
    <property type="match status" value="5"/>
</dbReference>
<dbReference type="InterPro" id="IPR001356">
    <property type="entry name" value="HD"/>
</dbReference>
<dbReference type="InterPro" id="IPR009057">
    <property type="entry name" value="Homeodomain-like_sf"/>
</dbReference>
<dbReference type="InterPro" id="IPR024578">
    <property type="entry name" value="Homez_homeobox_dom"/>
</dbReference>
<dbReference type="InterPro" id="IPR041057">
    <property type="entry name" value="ZHX_Znf_C2H2"/>
</dbReference>
<dbReference type="InterPro" id="IPR036236">
    <property type="entry name" value="Znf_C2H2_sf"/>
</dbReference>
<dbReference type="InterPro" id="IPR013087">
    <property type="entry name" value="Znf_C2H2_type"/>
</dbReference>
<dbReference type="PANTHER" id="PTHR15467:SF4">
    <property type="entry name" value="ZINC FINGERS AND HOMEOBOXES PROTEIN 1"/>
    <property type="match status" value="1"/>
</dbReference>
<dbReference type="PANTHER" id="PTHR15467">
    <property type="entry name" value="ZINC-FINGERS AND HOMEOBOXES RELATED"/>
    <property type="match status" value="1"/>
</dbReference>
<dbReference type="Pfam" id="PF00046">
    <property type="entry name" value="Homeodomain"/>
    <property type="match status" value="4"/>
</dbReference>
<dbReference type="Pfam" id="PF11569">
    <property type="entry name" value="Homez"/>
    <property type="match status" value="1"/>
</dbReference>
<dbReference type="Pfam" id="PF18387">
    <property type="entry name" value="zf_C2H2_ZHX"/>
    <property type="match status" value="1"/>
</dbReference>
<dbReference type="SMART" id="SM00389">
    <property type="entry name" value="HOX"/>
    <property type="match status" value="5"/>
</dbReference>
<dbReference type="SMART" id="SM00355">
    <property type="entry name" value="ZnF_C2H2"/>
    <property type="match status" value="2"/>
</dbReference>
<dbReference type="SUPFAM" id="SSF57667">
    <property type="entry name" value="beta-beta-alpha zinc fingers"/>
    <property type="match status" value="2"/>
</dbReference>
<dbReference type="SUPFAM" id="SSF46689">
    <property type="entry name" value="Homeodomain-like"/>
    <property type="match status" value="5"/>
</dbReference>
<dbReference type="PROSITE" id="PS50071">
    <property type="entry name" value="HOMEOBOX_2"/>
    <property type="match status" value="4"/>
</dbReference>
<dbReference type="PROSITE" id="PS50157">
    <property type="entry name" value="ZINC_FINGER_C2H2_2"/>
    <property type="match status" value="1"/>
</dbReference>
<feature type="chain" id="PRO_0000049388" description="Zinc fingers and homeoboxes protein 1">
    <location>
        <begin position="1"/>
        <end position="873"/>
    </location>
</feature>
<feature type="zinc finger region" description="C2H2-type 1" evidence="1 10">
    <location>
        <begin position="70"/>
        <end position="93"/>
    </location>
</feature>
<feature type="zinc finger region" description="C2H2-type 2" evidence="1 10">
    <location>
        <begin position="102"/>
        <end position="125"/>
    </location>
</feature>
<feature type="DNA-binding region" description="Homeobox 1" evidence="2 10">
    <location>
        <begin position="284"/>
        <end position="346"/>
    </location>
</feature>
<feature type="DNA-binding region" description="Homeobox 2" evidence="2 10">
    <location>
        <begin position="464"/>
        <end position="526"/>
    </location>
</feature>
<feature type="DNA-binding region" description="Homeobox 3" evidence="2 10">
    <location>
        <begin position="569"/>
        <end position="630"/>
    </location>
</feature>
<feature type="DNA-binding region" description="Homeobox 4" evidence="2 10">
    <location>
        <begin position="660"/>
        <end position="722"/>
    </location>
</feature>
<feature type="DNA-binding region" description="Homeobox 5" evidence="2 10">
    <location>
        <begin position="777"/>
        <end position="832"/>
    </location>
</feature>
<feature type="region of interest" description="Disordered" evidence="3">
    <location>
        <begin position="24"/>
        <end position="63"/>
    </location>
</feature>
<feature type="region of interest" description="Disordered" evidence="3">
    <location>
        <begin position="202"/>
        <end position="236"/>
    </location>
</feature>
<feature type="region of interest" description="Required for interaction with NFYA">
    <location>
        <begin position="272"/>
        <end position="564"/>
    </location>
</feature>
<feature type="region of interest" description="Required for dimerization">
    <location>
        <begin position="272"/>
        <end position="432"/>
    </location>
</feature>
<feature type="region of interest" description="Disordered" evidence="3">
    <location>
        <begin position="626"/>
        <end position="667"/>
    </location>
</feature>
<feature type="region of interest" description="Disordered" evidence="3">
    <location>
        <begin position="732"/>
        <end position="770"/>
    </location>
</feature>
<feature type="region of interest" description="Required for nuclear localization">
    <location>
        <begin position="734"/>
        <end position="768"/>
    </location>
</feature>
<feature type="region of interest" description="Disordered" evidence="3">
    <location>
        <begin position="829"/>
        <end position="873"/>
    </location>
</feature>
<feature type="region of interest" description="Required for repressor activity">
    <location>
        <begin position="831"/>
        <end position="873"/>
    </location>
</feature>
<feature type="compositionally biased region" description="Basic and acidic residues" evidence="3">
    <location>
        <begin position="212"/>
        <end position="221"/>
    </location>
</feature>
<feature type="compositionally biased region" description="Low complexity" evidence="3">
    <location>
        <begin position="223"/>
        <end position="236"/>
    </location>
</feature>
<feature type="compositionally biased region" description="Basic residues" evidence="3">
    <location>
        <begin position="740"/>
        <end position="764"/>
    </location>
</feature>
<feature type="compositionally biased region" description="Acidic residues" evidence="3">
    <location>
        <begin position="831"/>
        <end position="857"/>
    </location>
</feature>
<feature type="compositionally biased region" description="Basic residues" evidence="3">
    <location>
        <begin position="863"/>
        <end position="873"/>
    </location>
</feature>
<feature type="modified residue" description="Phosphothreonine" evidence="16">
    <location>
        <position position="36"/>
    </location>
</feature>
<feature type="modified residue" description="Phosphoserine" evidence="13">
    <location>
        <position position="45"/>
    </location>
</feature>
<feature type="modified residue" description="Phosphoserine" evidence="13 14">
    <location>
        <position position="47"/>
    </location>
</feature>
<feature type="modified residue" description="Phosphoserine" evidence="13 14 16">
    <location>
        <position position="48"/>
    </location>
</feature>
<feature type="modified residue" description="Phosphoserine" evidence="15">
    <location>
        <position position="202"/>
    </location>
</feature>
<feature type="modified residue" description="Phosphoserine" evidence="14">
    <location>
        <position position="648"/>
    </location>
</feature>
<feature type="modified residue" description="Phosphoserine" evidence="15">
    <location>
        <position position="774"/>
    </location>
</feature>
<feature type="cross-link" description="Glycyl lysine isopeptide (Lys-Gly) (interchain with G-Cter in SUMO2)" evidence="18">
    <location>
        <position position="159"/>
    </location>
</feature>
<feature type="cross-link" description="Glycyl lysine isopeptide (Lys-Gly) (interchain with G-Cter in SUMO2)" evidence="18">
    <location>
        <position position="441"/>
    </location>
</feature>
<feature type="cross-link" description="Glycyl lysine isopeptide (Lys-Gly) (interchain with G-Cter in SUMO2)" evidence="17 18">
    <location>
        <position position="454"/>
    </location>
</feature>
<feature type="cross-link" description="Glycyl lysine isopeptide (Lys-Gly) (interchain with G-Cter in SUMO2)" evidence="18">
    <location>
        <position position="485"/>
    </location>
</feature>
<feature type="cross-link" description="Glycyl lysine isopeptide (Lys-Gly) (interchain with G-Cter in SUMO2)" evidence="18">
    <location>
        <position position="629"/>
    </location>
</feature>
<feature type="sequence conflict" description="In Ref. 3; AAH40481." evidence="10" ref="3">
    <original>V</original>
    <variation>M</variation>
    <location>
        <position position="263"/>
    </location>
</feature>
<feature type="sequence conflict" description="In Ref. 3; AAH40481." evidence="10" ref="3">
    <original>H</original>
    <variation>R</variation>
    <location>
        <position position="792"/>
    </location>
</feature>
<feature type="turn" evidence="20">
    <location>
        <begin position="60"/>
        <end position="62"/>
    </location>
</feature>
<feature type="strand" evidence="20">
    <location>
        <begin position="68"/>
        <end position="71"/>
    </location>
</feature>
<feature type="strand" evidence="20">
    <location>
        <begin position="78"/>
        <end position="80"/>
    </location>
</feature>
<feature type="helix" evidence="20">
    <location>
        <begin position="82"/>
        <end position="92"/>
    </location>
</feature>
<feature type="strand" evidence="20">
    <location>
        <begin position="102"/>
        <end position="104"/>
    </location>
</feature>
<feature type="turn" evidence="20">
    <location>
        <begin position="105"/>
        <end position="108"/>
    </location>
</feature>
<feature type="strand" evidence="20">
    <location>
        <begin position="109"/>
        <end position="113"/>
    </location>
</feature>
<feature type="helix" evidence="20">
    <location>
        <begin position="115"/>
        <end position="118"/>
    </location>
</feature>
<feature type="helix" evidence="20">
    <location>
        <begin position="120"/>
        <end position="123"/>
    </location>
</feature>
<feature type="strand" evidence="20">
    <location>
        <begin position="131"/>
        <end position="135"/>
    </location>
</feature>
<feature type="strand" evidence="20">
    <location>
        <begin position="144"/>
        <end position="150"/>
    </location>
</feature>
<feature type="helix" evidence="21">
    <location>
        <begin position="473"/>
        <end position="485"/>
    </location>
</feature>
<feature type="helix" evidence="21">
    <location>
        <begin position="491"/>
        <end position="501"/>
    </location>
</feature>
<feature type="helix" evidence="21">
    <location>
        <begin position="505"/>
        <end position="518"/>
    </location>
</feature>
<feature type="turn" evidence="21">
    <location>
        <begin position="519"/>
        <end position="523"/>
    </location>
</feature>
<feature type="helix" evidence="19">
    <location>
        <begin position="577"/>
        <end position="589"/>
    </location>
</feature>
<feature type="helix" evidence="19">
    <location>
        <begin position="595"/>
        <end position="604"/>
    </location>
</feature>
<feature type="helix" evidence="19">
    <location>
        <begin position="609"/>
        <end position="624"/>
    </location>
</feature>
<feature type="strand" evidence="22">
    <location>
        <begin position="664"/>
        <end position="667"/>
    </location>
</feature>
<feature type="helix" evidence="22">
    <location>
        <begin position="669"/>
        <end position="681"/>
    </location>
</feature>
<feature type="helix" evidence="22">
    <location>
        <begin position="687"/>
        <end position="697"/>
    </location>
</feature>
<feature type="helix" evidence="22">
    <location>
        <begin position="701"/>
        <end position="715"/>
    </location>
</feature>
<feature type="turn" evidence="22">
    <location>
        <begin position="716"/>
        <end position="718"/>
    </location>
</feature>
<feature type="helix" evidence="22">
    <location>
        <begin position="721"/>
        <end position="730"/>
    </location>
</feature>
<keyword id="KW-0002">3D-structure</keyword>
<keyword id="KW-0025">Alternative splicing</keyword>
<keyword id="KW-0221">Differentiation</keyword>
<keyword id="KW-0238">DNA-binding</keyword>
<keyword id="KW-0371">Homeobox</keyword>
<keyword id="KW-1017">Isopeptide bond</keyword>
<keyword id="KW-0479">Metal-binding</keyword>
<keyword id="KW-0539">Nucleus</keyword>
<keyword id="KW-0597">Phosphoprotein</keyword>
<keyword id="KW-1267">Proteomics identification</keyword>
<keyword id="KW-1185">Reference proteome</keyword>
<keyword id="KW-0677">Repeat</keyword>
<keyword id="KW-0678">Repressor</keyword>
<keyword id="KW-0804">Transcription</keyword>
<keyword id="KW-0805">Transcription regulation</keyword>
<keyword id="KW-0832">Ubl conjugation</keyword>
<keyword id="KW-0862">Zinc</keyword>
<keyword id="KW-0863">Zinc-finger</keyword>
<evidence type="ECO:0000255" key="1">
    <source>
        <dbReference type="PROSITE-ProRule" id="PRU00042"/>
    </source>
</evidence>
<evidence type="ECO:0000255" key="2">
    <source>
        <dbReference type="PROSITE-ProRule" id="PRU00108"/>
    </source>
</evidence>
<evidence type="ECO:0000256" key="3">
    <source>
        <dbReference type="SAM" id="MobiDB-lite"/>
    </source>
</evidence>
<evidence type="ECO:0000269" key="4">
    <source>
    </source>
</evidence>
<evidence type="ECO:0000269" key="5">
    <source>
    </source>
</evidence>
<evidence type="ECO:0000269" key="6">
    <source>
    </source>
</evidence>
<evidence type="ECO:0000269" key="7">
    <source>
    </source>
</evidence>
<evidence type="ECO:0000269" key="8">
    <source>
    </source>
</evidence>
<evidence type="ECO:0000269" key="9">
    <source>
    </source>
</evidence>
<evidence type="ECO:0000305" key="10"/>
<evidence type="ECO:0000312" key="11">
    <source>
        <dbReference type="EMBL" id="AAF35183.1"/>
    </source>
</evidence>
<evidence type="ECO:0000312" key="12">
    <source>
        <dbReference type="EMBL" id="AAH40481.1"/>
    </source>
</evidence>
<evidence type="ECO:0007744" key="13">
    <source>
    </source>
</evidence>
<evidence type="ECO:0007744" key="14">
    <source>
    </source>
</evidence>
<evidence type="ECO:0007744" key="15">
    <source>
    </source>
</evidence>
<evidence type="ECO:0007744" key="16">
    <source>
    </source>
</evidence>
<evidence type="ECO:0007744" key="17">
    <source>
    </source>
</evidence>
<evidence type="ECO:0007744" key="18">
    <source>
    </source>
</evidence>
<evidence type="ECO:0007829" key="19">
    <source>
        <dbReference type="PDB" id="2ECB"/>
    </source>
</evidence>
<evidence type="ECO:0007829" key="20">
    <source>
        <dbReference type="PDB" id="2GHF"/>
    </source>
</evidence>
<evidence type="ECO:0007829" key="21">
    <source>
        <dbReference type="PDB" id="2LY9"/>
    </source>
</evidence>
<evidence type="ECO:0007829" key="22">
    <source>
        <dbReference type="PDB" id="3NAR"/>
    </source>
</evidence>
<accession>Q9UKY1</accession>
<accession>Q8IWD8</accession>